<organism>
    <name type="scientific">Mesoplasma florum (strain ATCC 33453 / NBRC 100688 / NCTC 11704 / L1)</name>
    <name type="common">Acholeplasma florum</name>
    <dbReference type="NCBI Taxonomy" id="265311"/>
    <lineage>
        <taxon>Bacteria</taxon>
        <taxon>Bacillati</taxon>
        <taxon>Mycoplasmatota</taxon>
        <taxon>Mollicutes</taxon>
        <taxon>Entomoplasmatales</taxon>
        <taxon>Entomoplasmataceae</taxon>
        <taxon>Mesoplasma</taxon>
    </lineage>
</organism>
<dbReference type="EMBL" id="AE017263">
    <property type="protein sequence ID" value="AAT75479.1"/>
    <property type="molecule type" value="Genomic_DNA"/>
</dbReference>
<dbReference type="RefSeq" id="WP_011183020.1">
    <property type="nucleotide sequence ID" value="NC_006055.1"/>
</dbReference>
<dbReference type="RefSeq" id="YP_053363.1">
    <property type="nucleotide sequence ID" value="NC_006055.1"/>
</dbReference>
<dbReference type="SMR" id="Q6F1Z4"/>
<dbReference type="STRING" id="265311.Mfl123"/>
<dbReference type="PaxDb" id="265311-Mfl123"/>
<dbReference type="EnsemblBacteria" id="AAT75479">
    <property type="protein sequence ID" value="AAT75479"/>
    <property type="gene ID" value="Mfl123"/>
</dbReference>
<dbReference type="GeneID" id="2897682"/>
<dbReference type="KEGG" id="mfl:Mfl123"/>
<dbReference type="PATRIC" id="fig|265311.5.peg.124"/>
<dbReference type="eggNOG" id="COG0087">
    <property type="taxonomic scope" value="Bacteria"/>
</dbReference>
<dbReference type="HOGENOM" id="CLU_044142_4_0_14"/>
<dbReference type="OrthoDB" id="9806135at2"/>
<dbReference type="Proteomes" id="UP000006647">
    <property type="component" value="Chromosome"/>
</dbReference>
<dbReference type="GO" id="GO:0022625">
    <property type="term" value="C:cytosolic large ribosomal subunit"/>
    <property type="evidence" value="ECO:0007669"/>
    <property type="project" value="TreeGrafter"/>
</dbReference>
<dbReference type="GO" id="GO:0019843">
    <property type="term" value="F:rRNA binding"/>
    <property type="evidence" value="ECO:0007669"/>
    <property type="project" value="UniProtKB-UniRule"/>
</dbReference>
<dbReference type="GO" id="GO:0003735">
    <property type="term" value="F:structural constituent of ribosome"/>
    <property type="evidence" value="ECO:0007669"/>
    <property type="project" value="InterPro"/>
</dbReference>
<dbReference type="GO" id="GO:0006412">
    <property type="term" value="P:translation"/>
    <property type="evidence" value="ECO:0007669"/>
    <property type="project" value="UniProtKB-UniRule"/>
</dbReference>
<dbReference type="FunFam" id="2.40.30.10:FF:000004">
    <property type="entry name" value="50S ribosomal protein L3"/>
    <property type="match status" value="1"/>
</dbReference>
<dbReference type="FunFam" id="3.30.160.810:FF:000001">
    <property type="entry name" value="50S ribosomal protein L3"/>
    <property type="match status" value="1"/>
</dbReference>
<dbReference type="Gene3D" id="3.30.160.810">
    <property type="match status" value="1"/>
</dbReference>
<dbReference type="Gene3D" id="2.40.30.10">
    <property type="entry name" value="Translation factors"/>
    <property type="match status" value="1"/>
</dbReference>
<dbReference type="HAMAP" id="MF_01325_B">
    <property type="entry name" value="Ribosomal_uL3_B"/>
    <property type="match status" value="1"/>
</dbReference>
<dbReference type="InterPro" id="IPR000597">
    <property type="entry name" value="Ribosomal_uL3"/>
</dbReference>
<dbReference type="InterPro" id="IPR019927">
    <property type="entry name" value="Ribosomal_uL3_bac/org-type"/>
</dbReference>
<dbReference type="InterPro" id="IPR019926">
    <property type="entry name" value="Ribosomal_uL3_CS"/>
</dbReference>
<dbReference type="InterPro" id="IPR009000">
    <property type="entry name" value="Transl_B-barrel_sf"/>
</dbReference>
<dbReference type="NCBIfam" id="TIGR03625">
    <property type="entry name" value="L3_bact"/>
    <property type="match status" value="1"/>
</dbReference>
<dbReference type="PANTHER" id="PTHR11229">
    <property type="entry name" value="50S RIBOSOMAL PROTEIN L3"/>
    <property type="match status" value="1"/>
</dbReference>
<dbReference type="PANTHER" id="PTHR11229:SF16">
    <property type="entry name" value="LARGE RIBOSOMAL SUBUNIT PROTEIN UL3C"/>
    <property type="match status" value="1"/>
</dbReference>
<dbReference type="Pfam" id="PF00297">
    <property type="entry name" value="Ribosomal_L3"/>
    <property type="match status" value="1"/>
</dbReference>
<dbReference type="SUPFAM" id="SSF50447">
    <property type="entry name" value="Translation proteins"/>
    <property type="match status" value="1"/>
</dbReference>
<dbReference type="PROSITE" id="PS00474">
    <property type="entry name" value="RIBOSOMAL_L3"/>
    <property type="match status" value="1"/>
</dbReference>
<gene>
    <name evidence="1" type="primary">rplC</name>
    <name type="ordered locus">Mfl123</name>
</gene>
<proteinExistence type="inferred from homology"/>
<sequence>MKGILGRKVEMTQVFTANGKLVPVTVVEVQPNTILQVKTLETNGYVATQLGVFDKRENLVNKPELGQFKKANSVPKRFVKEIRNMEGFEVGSVISASDIFETGQYVDVTGISKGKGFAGAIKRHNYSRGPMAHGSGYHRGIGSMGAIINRIFKSKKMAGHMGHVKRTVQNLEVIAIDNNIMLVKGSIPGPNKGFVTIKANVKGLSNTQAAELLVRNAPVATEAPIEAPVVEEVVSTEE</sequence>
<protein>
    <recommendedName>
        <fullName evidence="1">Large ribosomal subunit protein uL3</fullName>
    </recommendedName>
    <alternativeName>
        <fullName evidence="2">50S ribosomal protein L3</fullName>
    </alternativeName>
</protein>
<keyword id="KW-1185">Reference proteome</keyword>
<keyword id="KW-0687">Ribonucleoprotein</keyword>
<keyword id="KW-0689">Ribosomal protein</keyword>
<keyword id="KW-0694">RNA-binding</keyword>
<keyword id="KW-0699">rRNA-binding</keyword>
<comment type="function">
    <text evidence="1">One of the primary rRNA binding proteins, it binds directly near the 3'-end of the 23S rRNA, where it nucleates assembly of the 50S subunit.</text>
</comment>
<comment type="subunit">
    <text evidence="1">Part of the 50S ribosomal subunit. Forms a cluster with proteins L14 and L19.</text>
</comment>
<comment type="similarity">
    <text evidence="1">Belongs to the universal ribosomal protein uL3 family.</text>
</comment>
<reference key="1">
    <citation type="submission" date="2004-06" db="EMBL/GenBank/DDBJ databases">
        <authorList>
            <person name="Birren B.W."/>
            <person name="Stange-Thomann N."/>
            <person name="Hafez N."/>
            <person name="DeCaprio D."/>
            <person name="Fisher S."/>
            <person name="Butler J."/>
            <person name="Elkins T."/>
            <person name="Kodira C.D."/>
            <person name="Major J."/>
            <person name="Wang S."/>
            <person name="Nicol R."/>
            <person name="Nusbaum C."/>
        </authorList>
    </citation>
    <scope>NUCLEOTIDE SEQUENCE [LARGE SCALE GENOMIC DNA]</scope>
    <source>
        <strain>ATCC 33453 / NBRC 100688 / NCTC 11704 / L1</strain>
    </source>
</reference>
<accession>Q6F1Z4</accession>
<feature type="chain" id="PRO_0000241364" description="Large ribosomal subunit protein uL3">
    <location>
        <begin position="1"/>
        <end position="238"/>
    </location>
</feature>
<name>RL3_MESFL</name>
<evidence type="ECO:0000255" key="1">
    <source>
        <dbReference type="HAMAP-Rule" id="MF_01325"/>
    </source>
</evidence>
<evidence type="ECO:0000305" key="2"/>